<keyword id="KW-0052">Apoplast</keyword>
<keyword id="KW-0134">Cell wall</keyword>
<keyword id="KW-0903">Direct protein sequencing</keyword>
<keyword id="KW-1015">Disulfide bond</keyword>
<keyword id="KW-0325">Glycoprotein</keyword>
<keyword id="KW-0433">Leucine-rich repeat</keyword>
<keyword id="KW-0677">Repeat</keyword>
<keyword id="KW-0964">Secreted</keyword>
<keyword id="KW-0732">Signal</keyword>
<organism>
    <name type="scientific">Pyrus communis</name>
    <name type="common">Pear</name>
    <name type="synonym">Pyrus domestica</name>
    <dbReference type="NCBI Taxonomy" id="23211"/>
    <lineage>
        <taxon>Eukaryota</taxon>
        <taxon>Viridiplantae</taxon>
        <taxon>Streptophyta</taxon>
        <taxon>Embryophyta</taxon>
        <taxon>Tracheophyta</taxon>
        <taxon>Spermatophyta</taxon>
        <taxon>Magnoliopsida</taxon>
        <taxon>eudicotyledons</taxon>
        <taxon>Gunneridae</taxon>
        <taxon>Pentapetalae</taxon>
        <taxon>rosids</taxon>
        <taxon>fabids</taxon>
        <taxon>Rosales</taxon>
        <taxon>Rosaceae</taxon>
        <taxon>Amygdaloideae</taxon>
        <taxon>Maleae</taxon>
        <taxon>Pyrus</taxon>
    </lineage>
</organism>
<feature type="signal peptide" evidence="4">
    <location>
        <begin position="1"/>
        <end position="24"/>
    </location>
</feature>
<feature type="chain" id="PRO_0000023888" description="Polygalacturonase inhibitor">
    <location>
        <begin position="25"/>
        <end position="330"/>
    </location>
</feature>
<feature type="repeat" description="LRR 1" evidence="2">
    <location>
        <begin position="69"/>
        <end position="92"/>
    </location>
</feature>
<feature type="repeat" description="LRR 2" evidence="2">
    <location>
        <begin position="93"/>
        <end position="118"/>
    </location>
</feature>
<feature type="repeat" description="LRR 3" evidence="2">
    <location>
        <begin position="119"/>
        <end position="141"/>
    </location>
</feature>
<feature type="repeat" description="LRR 4" evidence="2">
    <location>
        <begin position="142"/>
        <end position="166"/>
    </location>
</feature>
<feature type="repeat" description="LRR 5" evidence="2">
    <location>
        <begin position="167"/>
        <end position="192"/>
    </location>
</feature>
<feature type="repeat" description="LRR 6" evidence="2">
    <location>
        <begin position="194"/>
        <end position="215"/>
    </location>
</feature>
<feature type="repeat" description="LRR 7" evidence="2">
    <location>
        <begin position="217"/>
        <end position="237"/>
    </location>
</feature>
<feature type="repeat" description="LRR 8" evidence="2">
    <location>
        <begin position="239"/>
        <end position="261"/>
    </location>
</feature>
<feature type="repeat" description="LRR 9" evidence="2">
    <location>
        <begin position="262"/>
        <end position="285"/>
    </location>
</feature>
<feature type="repeat" description="LRR 10" evidence="2">
    <location>
        <begin position="287"/>
        <end position="309"/>
    </location>
</feature>
<feature type="glycosylation site" description="N-linked (GlcNAc...) asparagine" evidence="3">
    <location>
        <position position="106"/>
    </location>
</feature>
<feature type="glycosylation site" description="N-linked (GlcNAc...) asparagine" evidence="3">
    <location>
        <position position="130"/>
    </location>
</feature>
<feature type="glycosylation site" description="N-linked (GlcNAc...) asparagine" evidence="3">
    <location>
        <position position="144"/>
    </location>
</feature>
<feature type="glycosylation site" description="N-linked (GlcNAc...) asparagine" evidence="3">
    <location>
        <position position="154"/>
    </location>
</feature>
<feature type="glycosylation site" description="N-linked (GlcNAc...) asparagine" evidence="3">
    <location>
        <position position="238"/>
    </location>
</feature>
<feature type="glycosylation site" description="N-linked (GlcNAc...) asparagine" evidence="3">
    <location>
        <position position="254"/>
    </location>
</feature>
<feature type="glycosylation site" description="N-linked (GlcNAc...) asparagine" evidence="3">
    <location>
        <position position="291"/>
    </location>
</feature>
<feature type="disulfide bond" evidence="1">
    <location>
        <begin position="27"/>
        <end position="57"/>
    </location>
</feature>
<feature type="disulfide bond" evidence="1">
    <location>
        <begin position="58"/>
        <end position="65"/>
    </location>
</feature>
<feature type="disulfide bond" evidence="1">
    <location>
        <begin position="298"/>
        <end position="320"/>
    </location>
</feature>
<feature type="disulfide bond" evidence="1">
    <location>
        <begin position="322"/>
        <end position="329"/>
    </location>
</feature>
<sequence length="330" mass="36505">MELKFSTFLSLTLLFSSVLNPALSDLCNPDDKKVLLQIKKAFGDPYVLASWKSDTDCCDWYCVTCDSTTNRINSLTIFAGQVSGQIPALVGDLPYLETLEFHKQPNLTGPIQPAIAKLKGLKSLRLSWTNLSGSVPDFLSQLKNLTFLDLSFNNLTGAIPSSLSELPNLGALRLDRNKLTGHIPISFGQFIGNVPDLYLSHNQLSGNIPTSFAQMDFTSIDLSRNKLEGDASVIFGLNKTTQIVDLSRNLLEFNLSKVEFPTSLTSLDINHNKIYGSIPVEFTQLNFQFLNVSYNRLCGQIPVGGKLQSFDEYSYFHNRCLCGAPLPSCK</sequence>
<comment type="function">
    <text evidence="4">Inhibitor of fungal polygalacturonase. It is an important factor for plant resistance to phytopathogenic fungi.</text>
</comment>
<comment type="subunit">
    <text>Homodimer.</text>
</comment>
<comment type="subcellular location">
    <subcellularLocation>
        <location>Secreted</location>
        <location>Extracellular space</location>
        <location>Apoplast</location>
    </subcellularLocation>
    <subcellularLocation>
        <location evidence="1">Secreted</location>
        <location evidence="1">Cell wall</location>
    </subcellularLocation>
</comment>
<comment type="tissue specificity">
    <text evidence="4">Mostly expressed in fruits, and, to a lower extent, in flowers and leaves.</text>
</comment>
<comment type="PTM">
    <text evidence="4">N-linked glycosylated.</text>
</comment>
<comment type="similarity">
    <text evidence="5">Belongs to the polygalacturonase-inhibiting protein family.</text>
</comment>
<evidence type="ECO:0000250" key="1">
    <source>
        <dbReference type="UniProtKB" id="P58822"/>
    </source>
</evidence>
<evidence type="ECO:0000255" key="2"/>
<evidence type="ECO:0000255" key="3">
    <source>
        <dbReference type="PROSITE-ProRule" id="PRU00498"/>
    </source>
</evidence>
<evidence type="ECO:0000269" key="4">
    <source>
    </source>
</evidence>
<evidence type="ECO:0000305" key="5"/>
<reference key="1">
    <citation type="journal article" date="1993" name="Plant Physiol.">
        <title>Molecular characterization of a polygalacturonase inhibitor from Pyrus communis L. cv Bartlett.</title>
        <authorList>
            <person name="Stotz H.U."/>
            <person name="Powell A.L."/>
            <person name="Damon S.E."/>
            <person name="Greve L.C."/>
            <person name="Bennett A.B."/>
            <person name="Labavitch J.M."/>
        </authorList>
    </citation>
    <scope>NUCLEOTIDE SEQUENCE [MRNA]</scope>
    <scope>PARTIAL PROTEIN SEQUENCE</scope>
    <scope>SIGNAL</scope>
    <scope>FUNCTION</scope>
    <scope>GLYCOSYLATION</scope>
    <scope>TISSUE SPECIFICITY</scope>
    <source>
        <strain>cv. Bartlett</strain>
    </source>
</reference>
<reference key="2">
    <citation type="journal article" date="1983" name="Physiol. Mol. Plant Pathol.">
        <title>Purification and partial characterization of 'Bartlett' pear polygalacturonase inhibitors.</title>
        <authorList>
            <person name="Abu-Goukh A.A."/>
            <person name="Greve L.C."/>
            <person name="Labavitch J.M."/>
        </authorList>
    </citation>
    <scope>CHARACTERIZATION</scope>
    <source>
        <strain>cv. Bartlett</strain>
        <tissue>Fruit</tissue>
    </source>
</reference>
<name>PGIP_PYRCO</name>
<accession>Q05091</accession>
<proteinExistence type="evidence at protein level"/>
<gene>
    <name type="primary">PGIP</name>
</gene>
<dbReference type="EMBL" id="L09264">
    <property type="protein sequence ID" value="AAA33865.1"/>
    <property type="molecule type" value="mRNA"/>
</dbReference>
<dbReference type="PIR" id="JQ2262">
    <property type="entry name" value="JQ2262"/>
</dbReference>
<dbReference type="SMR" id="Q05091"/>
<dbReference type="GlyCosmos" id="Q05091">
    <property type="glycosylation" value="7 sites, No reported glycans"/>
</dbReference>
<dbReference type="GO" id="GO:0048046">
    <property type="term" value="C:apoplast"/>
    <property type="evidence" value="ECO:0007669"/>
    <property type="project" value="UniProtKB-SubCell"/>
</dbReference>
<dbReference type="FunFam" id="3.80.10.10:FF:000348">
    <property type="entry name" value="Polygalacturonase inhibitor 1"/>
    <property type="match status" value="1"/>
</dbReference>
<dbReference type="Gene3D" id="3.80.10.10">
    <property type="entry name" value="Ribonuclease Inhibitor"/>
    <property type="match status" value="1"/>
</dbReference>
<dbReference type="InterPro" id="IPR053211">
    <property type="entry name" value="DNA_repair-toleration"/>
</dbReference>
<dbReference type="InterPro" id="IPR001611">
    <property type="entry name" value="Leu-rich_rpt"/>
</dbReference>
<dbReference type="InterPro" id="IPR032675">
    <property type="entry name" value="LRR_dom_sf"/>
</dbReference>
<dbReference type="InterPro" id="IPR013210">
    <property type="entry name" value="LRR_N_plant-typ"/>
</dbReference>
<dbReference type="PANTHER" id="PTHR48060">
    <property type="entry name" value="DNA DAMAGE-REPAIR/TOLERATION PROTEIN DRT100"/>
    <property type="match status" value="1"/>
</dbReference>
<dbReference type="PANTHER" id="PTHR48060:SF21">
    <property type="entry name" value="L DOMAIN-LIKE PROTEIN"/>
    <property type="match status" value="1"/>
</dbReference>
<dbReference type="Pfam" id="PF00560">
    <property type="entry name" value="LRR_1"/>
    <property type="match status" value="2"/>
</dbReference>
<dbReference type="Pfam" id="PF13855">
    <property type="entry name" value="LRR_8"/>
    <property type="match status" value="1"/>
</dbReference>
<dbReference type="Pfam" id="PF08263">
    <property type="entry name" value="LRRNT_2"/>
    <property type="match status" value="1"/>
</dbReference>
<dbReference type="SUPFAM" id="SSF52058">
    <property type="entry name" value="L domain-like"/>
    <property type="match status" value="1"/>
</dbReference>
<protein>
    <recommendedName>
        <fullName>Polygalacturonase inhibitor</fullName>
    </recommendedName>
    <alternativeName>
        <fullName>Polygalacturonase-inhibiting protein</fullName>
        <shortName>PGIG</shortName>
    </alternativeName>
</protein>